<evidence type="ECO:0000269" key="1">
    <source>
    </source>
</evidence>
<gene>
    <name type="ordered locus">Rv2654c</name>
</gene>
<keyword id="KW-1185">Reference proteome</keyword>
<keyword id="KW-1277">Toxin-antitoxin system</keyword>
<protein>
    <recommendedName>
        <fullName>Antitoxin Rv2654c</fullName>
    </recommendedName>
</protein>
<feature type="chain" id="PRO_0000406888" description="Antitoxin Rv2654c">
    <location>
        <begin position="1"/>
        <end position="81"/>
    </location>
</feature>
<dbReference type="EMBL" id="AL123456">
    <property type="protein sequence ID" value="CCP45452.1"/>
    <property type="molecule type" value="Genomic_DNA"/>
</dbReference>
<dbReference type="PIR" id="B70966">
    <property type="entry name" value="B70966"/>
</dbReference>
<dbReference type="RefSeq" id="NP_217170.1">
    <property type="nucleotide sequence ID" value="NC_000962.3"/>
</dbReference>
<dbReference type="RefSeq" id="WP_003899415.1">
    <property type="nucleotide sequence ID" value="NZ_NVQJ01000079.1"/>
</dbReference>
<dbReference type="STRING" id="83332.Rv2654c"/>
<dbReference type="PaxDb" id="83332-Rv2654c"/>
<dbReference type="DNASU" id="888154"/>
<dbReference type="GeneID" id="888154"/>
<dbReference type="KEGG" id="mtu:Rv2654c"/>
<dbReference type="KEGG" id="mtv:RVBD_2654c"/>
<dbReference type="TubercuList" id="Rv2654c"/>
<dbReference type="InParanoid" id="P9WJ11"/>
<dbReference type="Proteomes" id="UP000001584">
    <property type="component" value="Chromosome"/>
</dbReference>
<dbReference type="GO" id="GO:0045927">
    <property type="term" value="P:positive regulation of growth"/>
    <property type="evidence" value="ECO:0000315"/>
    <property type="project" value="MTBBASE"/>
</dbReference>
<comment type="function">
    <text evidence="1">Antitoxin component of a type II toxin-antitoxin (TA) system. Upon expression in M.smegmatis neutralizes the effect of cognate toxin Rv2653c.</text>
</comment>
<proteinExistence type="evidence at protein level"/>
<name>Y2654_MYCTU</name>
<accession>P9WJ11</accession>
<accession>L0TD62</accession>
<accession>P71951</accession>
<accession>Q7D6U0</accession>
<organism>
    <name type="scientific">Mycobacterium tuberculosis (strain ATCC 25618 / H37Rv)</name>
    <dbReference type="NCBI Taxonomy" id="83332"/>
    <lineage>
        <taxon>Bacteria</taxon>
        <taxon>Bacillati</taxon>
        <taxon>Actinomycetota</taxon>
        <taxon>Actinomycetes</taxon>
        <taxon>Mycobacteriales</taxon>
        <taxon>Mycobacteriaceae</taxon>
        <taxon>Mycobacterium</taxon>
        <taxon>Mycobacterium tuberculosis complex</taxon>
    </lineage>
</organism>
<sequence>MSGHALAARTLLAAADELVGGPPVEASAAALAGDAAGAWRTAAVELARALVRAVAESHGVAAVLFAATAAAAAAVDRGDPP</sequence>
<reference key="1">
    <citation type="journal article" date="1998" name="Nature">
        <title>Deciphering the biology of Mycobacterium tuberculosis from the complete genome sequence.</title>
        <authorList>
            <person name="Cole S.T."/>
            <person name="Brosch R."/>
            <person name="Parkhill J."/>
            <person name="Garnier T."/>
            <person name="Churcher C.M."/>
            <person name="Harris D.E."/>
            <person name="Gordon S.V."/>
            <person name="Eiglmeier K."/>
            <person name="Gas S."/>
            <person name="Barry C.E. III"/>
            <person name="Tekaia F."/>
            <person name="Badcock K."/>
            <person name="Basham D."/>
            <person name="Brown D."/>
            <person name="Chillingworth T."/>
            <person name="Connor R."/>
            <person name="Davies R.M."/>
            <person name="Devlin K."/>
            <person name="Feltwell T."/>
            <person name="Gentles S."/>
            <person name="Hamlin N."/>
            <person name="Holroyd S."/>
            <person name="Hornsby T."/>
            <person name="Jagels K."/>
            <person name="Krogh A."/>
            <person name="McLean J."/>
            <person name="Moule S."/>
            <person name="Murphy L.D."/>
            <person name="Oliver S."/>
            <person name="Osborne J."/>
            <person name="Quail M.A."/>
            <person name="Rajandream M.A."/>
            <person name="Rogers J."/>
            <person name="Rutter S."/>
            <person name="Seeger K."/>
            <person name="Skelton S."/>
            <person name="Squares S."/>
            <person name="Squares R."/>
            <person name="Sulston J.E."/>
            <person name="Taylor K."/>
            <person name="Whitehead S."/>
            <person name="Barrell B.G."/>
        </authorList>
    </citation>
    <scope>NUCLEOTIDE SEQUENCE [LARGE SCALE GENOMIC DNA]</scope>
    <source>
        <strain>ATCC 25618 / H37Rv</strain>
    </source>
</reference>
<reference key="2">
    <citation type="journal article" date="2009" name="PLoS Genet.">
        <title>Comprehensive functional analysis of Mycobacterium tuberculosis toxin-antitoxin systems: implications for pathogenesis, stress responses, and evolution.</title>
        <authorList>
            <person name="Ramage H.R."/>
            <person name="Connolly L.E."/>
            <person name="Cox J.S."/>
        </authorList>
    </citation>
    <scope>EXPRESSION IN M.SMEGMATIS</scope>
    <scope>FUNCTION AS AN ANTITOXIN</scope>
    <source>
        <strain>ATCC 35801 / TMC 107 / Erdman</strain>
    </source>
</reference>